<name>RUVC_MYCUA</name>
<proteinExistence type="inferred from homology"/>
<feature type="chain" id="PRO_1000002781" description="Crossover junction endodeoxyribonuclease RuvC">
    <location>
        <begin position="1"/>
        <end position="184"/>
    </location>
</feature>
<feature type="active site" evidence="1">
    <location>
        <position position="7"/>
    </location>
</feature>
<feature type="active site" evidence="1">
    <location>
        <position position="68"/>
    </location>
</feature>
<feature type="active site" evidence="1">
    <location>
        <position position="141"/>
    </location>
</feature>
<feature type="binding site" evidence="1">
    <location>
        <position position="7"/>
    </location>
    <ligand>
        <name>Mg(2+)</name>
        <dbReference type="ChEBI" id="CHEBI:18420"/>
        <label>1</label>
    </ligand>
</feature>
<feature type="binding site" evidence="1">
    <location>
        <position position="68"/>
    </location>
    <ligand>
        <name>Mg(2+)</name>
        <dbReference type="ChEBI" id="CHEBI:18420"/>
        <label>2</label>
    </ligand>
</feature>
<feature type="binding site" evidence="1">
    <location>
        <position position="141"/>
    </location>
    <ligand>
        <name>Mg(2+)</name>
        <dbReference type="ChEBI" id="CHEBI:18420"/>
        <label>1</label>
    </ligand>
</feature>
<reference key="1">
    <citation type="journal article" date="2007" name="Genome Res.">
        <title>Reductive evolution and niche adaptation inferred from the genome of Mycobacterium ulcerans, the causative agent of Buruli ulcer.</title>
        <authorList>
            <person name="Stinear T.P."/>
            <person name="Seemann T."/>
            <person name="Pidot S."/>
            <person name="Frigui W."/>
            <person name="Reysset G."/>
            <person name="Garnier T."/>
            <person name="Meurice G."/>
            <person name="Simon D."/>
            <person name="Bouchier C."/>
            <person name="Ma L."/>
            <person name="Tichit M."/>
            <person name="Porter J.L."/>
            <person name="Ryan J."/>
            <person name="Johnson P.D.R."/>
            <person name="Davies J.K."/>
            <person name="Jenkin G.A."/>
            <person name="Small P.L.C."/>
            <person name="Jones L.M."/>
            <person name="Tekaia F."/>
            <person name="Laval F."/>
            <person name="Daffe M."/>
            <person name="Parkhill J."/>
            <person name="Cole S.T."/>
        </authorList>
    </citation>
    <scope>NUCLEOTIDE SEQUENCE [LARGE SCALE GENOMIC DNA]</scope>
    <source>
        <strain>Agy99</strain>
    </source>
</reference>
<organism>
    <name type="scientific">Mycobacterium ulcerans (strain Agy99)</name>
    <dbReference type="NCBI Taxonomy" id="362242"/>
    <lineage>
        <taxon>Bacteria</taxon>
        <taxon>Bacillati</taxon>
        <taxon>Actinomycetota</taxon>
        <taxon>Actinomycetes</taxon>
        <taxon>Mycobacteriales</taxon>
        <taxon>Mycobacteriaceae</taxon>
        <taxon>Mycobacterium</taxon>
        <taxon>Mycobacterium ulcerans group</taxon>
    </lineage>
</organism>
<protein>
    <recommendedName>
        <fullName evidence="1">Crossover junction endodeoxyribonuclease RuvC</fullName>
        <ecNumber evidence="1">3.1.21.10</ecNumber>
    </recommendedName>
    <alternativeName>
        <fullName evidence="1">Holliday junction nuclease RuvC</fullName>
    </alternativeName>
    <alternativeName>
        <fullName evidence="1">Holliday junction resolvase RuvC</fullName>
    </alternativeName>
</protein>
<dbReference type="EC" id="3.1.21.10" evidence="1"/>
<dbReference type="EMBL" id="CP000325">
    <property type="protein sequence ID" value="ABL04200.1"/>
    <property type="molecule type" value="Genomic_DNA"/>
</dbReference>
<dbReference type="RefSeq" id="WP_011739820.1">
    <property type="nucleotide sequence ID" value="NC_008611.1"/>
</dbReference>
<dbReference type="SMR" id="A0PPD1"/>
<dbReference type="GeneID" id="93437647"/>
<dbReference type="KEGG" id="mul:MUL_1714"/>
<dbReference type="eggNOG" id="COG0817">
    <property type="taxonomic scope" value="Bacteria"/>
</dbReference>
<dbReference type="HOGENOM" id="CLU_091257_0_2_11"/>
<dbReference type="Proteomes" id="UP000000765">
    <property type="component" value="Chromosome"/>
</dbReference>
<dbReference type="GO" id="GO:0005737">
    <property type="term" value="C:cytoplasm"/>
    <property type="evidence" value="ECO:0007669"/>
    <property type="project" value="UniProtKB-SubCell"/>
</dbReference>
<dbReference type="GO" id="GO:0048476">
    <property type="term" value="C:Holliday junction resolvase complex"/>
    <property type="evidence" value="ECO:0007669"/>
    <property type="project" value="UniProtKB-UniRule"/>
</dbReference>
<dbReference type="GO" id="GO:0008821">
    <property type="term" value="F:crossover junction DNA endonuclease activity"/>
    <property type="evidence" value="ECO:0007669"/>
    <property type="project" value="UniProtKB-UniRule"/>
</dbReference>
<dbReference type="GO" id="GO:0003677">
    <property type="term" value="F:DNA binding"/>
    <property type="evidence" value="ECO:0007669"/>
    <property type="project" value="UniProtKB-KW"/>
</dbReference>
<dbReference type="GO" id="GO:0000287">
    <property type="term" value="F:magnesium ion binding"/>
    <property type="evidence" value="ECO:0007669"/>
    <property type="project" value="UniProtKB-UniRule"/>
</dbReference>
<dbReference type="GO" id="GO:0006310">
    <property type="term" value="P:DNA recombination"/>
    <property type="evidence" value="ECO:0007669"/>
    <property type="project" value="UniProtKB-UniRule"/>
</dbReference>
<dbReference type="GO" id="GO:0006281">
    <property type="term" value="P:DNA repair"/>
    <property type="evidence" value="ECO:0007669"/>
    <property type="project" value="UniProtKB-UniRule"/>
</dbReference>
<dbReference type="CDD" id="cd16962">
    <property type="entry name" value="RuvC"/>
    <property type="match status" value="1"/>
</dbReference>
<dbReference type="FunFam" id="3.30.420.10:FF:000002">
    <property type="entry name" value="Crossover junction endodeoxyribonuclease RuvC"/>
    <property type="match status" value="1"/>
</dbReference>
<dbReference type="Gene3D" id="3.30.420.10">
    <property type="entry name" value="Ribonuclease H-like superfamily/Ribonuclease H"/>
    <property type="match status" value="1"/>
</dbReference>
<dbReference type="HAMAP" id="MF_00034">
    <property type="entry name" value="RuvC"/>
    <property type="match status" value="1"/>
</dbReference>
<dbReference type="InterPro" id="IPR012337">
    <property type="entry name" value="RNaseH-like_sf"/>
</dbReference>
<dbReference type="InterPro" id="IPR036397">
    <property type="entry name" value="RNaseH_sf"/>
</dbReference>
<dbReference type="InterPro" id="IPR020563">
    <property type="entry name" value="X-over_junc_endoDNase_Mg_BS"/>
</dbReference>
<dbReference type="InterPro" id="IPR002176">
    <property type="entry name" value="X-over_junc_endoDNase_RuvC"/>
</dbReference>
<dbReference type="NCBIfam" id="TIGR00228">
    <property type="entry name" value="ruvC"/>
    <property type="match status" value="1"/>
</dbReference>
<dbReference type="PANTHER" id="PTHR30194">
    <property type="entry name" value="CROSSOVER JUNCTION ENDODEOXYRIBONUCLEASE RUVC"/>
    <property type="match status" value="1"/>
</dbReference>
<dbReference type="PANTHER" id="PTHR30194:SF3">
    <property type="entry name" value="CROSSOVER JUNCTION ENDODEOXYRIBONUCLEASE RUVC"/>
    <property type="match status" value="1"/>
</dbReference>
<dbReference type="Pfam" id="PF02075">
    <property type="entry name" value="RuvC"/>
    <property type="match status" value="1"/>
</dbReference>
<dbReference type="PRINTS" id="PR00696">
    <property type="entry name" value="RSOLVASERUVC"/>
</dbReference>
<dbReference type="SUPFAM" id="SSF53098">
    <property type="entry name" value="Ribonuclease H-like"/>
    <property type="match status" value="1"/>
</dbReference>
<dbReference type="PROSITE" id="PS01321">
    <property type="entry name" value="RUVC"/>
    <property type="match status" value="1"/>
</dbReference>
<gene>
    <name evidence="1" type="primary">ruvC</name>
    <name type="ordered locus">MUL_1714</name>
</gene>
<comment type="function">
    <text evidence="1">The RuvA-RuvB-RuvC complex processes Holliday junction (HJ) DNA during genetic recombination and DNA repair. Endonuclease that resolves HJ intermediates. Cleaves cruciform DNA by making single-stranded nicks across the HJ at symmetrical positions within the homologous arms, yielding a 5'-phosphate and a 3'-hydroxyl group; requires a central core of homology in the junction. The consensus cleavage sequence is 5'-(A/T)TT(C/G)-3'. Cleavage occurs on the 3'-side of the TT dinucleotide at the point of strand exchange. HJ branch migration catalyzed by RuvA-RuvB allows RuvC to scan DNA until it finds its consensus sequence, where it cleaves and resolves the cruciform DNA.</text>
</comment>
<comment type="catalytic activity">
    <reaction evidence="1">
        <text>Endonucleolytic cleavage at a junction such as a reciprocal single-stranded crossover between two homologous DNA duplexes (Holliday junction).</text>
        <dbReference type="EC" id="3.1.21.10"/>
    </reaction>
</comment>
<comment type="cofactor">
    <cofactor evidence="1">
        <name>Mg(2+)</name>
        <dbReference type="ChEBI" id="CHEBI:18420"/>
    </cofactor>
    <text evidence="1">Binds 2 Mg(2+) ion per subunit.</text>
</comment>
<comment type="subunit">
    <text evidence="1">Homodimer which binds Holliday junction (HJ) DNA. The HJ becomes 2-fold symmetrical on binding to RuvC with unstacked arms; it has a different conformation from HJ DNA in complex with RuvA. In the full resolvosome a probable DNA-RuvA(4)-RuvB(12)-RuvC(2) complex forms which resolves the HJ.</text>
</comment>
<comment type="subcellular location">
    <subcellularLocation>
        <location evidence="1">Cytoplasm</location>
    </subcellularLocation>
</comment>
<comment type="similarity">
    <text evidence="1">Belongs to the RuvC family.</text>
</comment>
<sequence>MRVMGVDPGLTRCGLSLIESGQGRQLTALDVDVVRTPSDAPLSSRLLAINEAVEHWLETHRPDVVAIERVFSQQNVKTVMGTAQAGGVVALAAAKRGVEVHFHTPSEVKAAVTGNGTADKAQVTAMVTRILALQTKPTPADAADALALAICHCWRAPMIAQMAKAHALAEQQRRSYTAKLKAAR</sequence>
<accession>A0PPD1</accession>
<keyword id="KW-0963">Cytoplasm</keyword>
<keyword id="KW-0227">DNA damage</keyword>
<keyword id="KW-0233">DNA recombination</keyword>
<keyword id="KW-0234">DNA repair</keyword>
<keyword id="KW-0238">DNA-binding</keyword>
<keyword id="KW-0255">Endonuclease</keyword>
<keyword id="KW-0378">Hydrolase</keyword>
<keyword id="KW-0460">Magnesium</keyword>
<keyword id="KW-0479">Metal-binding</keyword>
<keyword id="KW-0540">Nuclease</keyword>
<evidence type="ECO:0000255" key="1">
    <source>
        <dbReference type="HAMAP-Rule" id="MF_00034"/>
    </source>
</evidence>